<organism>
    <name type="scientific">Shewanella sp. (strain MR-4)</name>
    <dbReference type="NCBI Taxonomy" id="60480"/>
    <lineage>
        <taxon>Bacteria</taxon>
        <taxon>Pseudomonadati</taxon>
        <taxon>Pseudomonadota</taxon>
        <taxon>Gammaproteobacteria</taxon>
        <taxon>Alteromonadales</taxon>
        <taxon>Shewanellaceae</taxon>
        <taxon>Shewanella</taxon>
    </lineage>
</organism>
<reference key="1">
    <citation type="submission" date="2006-08" db="EMBL/GenBank/DDBJ databases">
        <title>Complete sequence of Shewanella sp. MR-4.</title>
        <authorList>
            <consortium name="US DOE Joint Genome Institute"/>
            <person name="Copeland A."/>
            <person name="Lucas S."/>
            <person name="Lapidus A."/>
            <person name="Barry K."/>
            <person name="Detter J.C."/>
            <person name="Glavina del Rio T."/>
            <person name="Hammon N."/>
            <person name="Israni S."/>
            <person name="Dalin E."/>
            <person name="Tice H."/>
            <person name="Pitluck S."/>
            <person name="Kiss H."/>
            <person name="Brettin T."/>
            <person name="Bruce D."/>
            <person name="Han C."/>
            <person name="Tapia R."/>
            <person name="Gilna P."/>
            <person name="Schmutz J."/>
            <person name="Larimer F."/>
            <person name="Land M."/>
            <person name="Hauser L."/>
            <person name="Kyrpides N."/>
            <person name="Mikhailova N."/>
            <person name="Nealson K."/>
            <person name="Konstantinidis K."/>
            <person name="Klappenbach J."/>
            <person name="Tiedje J."/>
            <person name="Richardson P."/>
        </authorList>
    </citation>
    <scope>NUCLEOTIDE SEQUENCE [LARGE SCALE GENOMIC DNA]</scope>
    <source>
        <strain>MR-4</strain>
    </source>
</reference>
<evidence type="ECO:0000255" key="1">
    <source>
        <dbReference type="HAMAP-Rule" id="MF_00636"/>
    </source>
</evidence>
<keyword id="KW-0067">ATP-binding</keyword>
<keyword id="KW-0342">GTP-binding</keyword>
<keyword id="KW-0547">Nucleotide-binding</keyword>
<dbReference type="EMBL" id="CP000446">
    <property type="protein sequence ID" value="ABI37750.1"/>
    <property type="molecule type" value="Genomic_DNA"/>
</dbReference>
<dbReference type="RefSeq" id="WP_011621468.1">
    <property type="nucleotide sequence ID" value="NC_008321.1"/>
</dbReference>
<dbReference type="SMR" id="Q0HMG7"/>
<dbReference type="KEGG" id="she:Shewmr4_0670"/>
<dbReference type="HOGENOM" id="CLU_059558_1_1_6"/>
<dbReference type="GO" id="GO:0005524">
    <property type="term" value="F:ATP binding"/>
    <property type="evidence" value="ECO:0007669"/>
    <property type="project" value="UniProtKB-UniRule"/>
</dbReference>
<dbReference type="GO" id="GO:0005525">
    <property type="term" value="F:GTP binding"/>
    <property type="evidence" value="ECO:0007669"/>
    <property type="project" value="UniProtKB-UniRule"/>
</dbReference>
<dbReference type="HAMAP" id="MF_00636">
    <property type="entry name" value="RapZ_like"/>
    <property type="match status" value="1"/>
</dbReference>
<dbReference type="InterPro" id="IPR027417">
    <property type="entry name" value="P-loop_NTPase"/>
</dbReference>
<dbReference type="InterPro" id="IPR005337">
    <property type="entry name" value="RapZ-like"/>
</dbReference>
<dbReference type="InterPro" id="IPR053930">
    <property type="entry name" value="RapZ-like_N"/>
</dbReference>
<dbReference type="InterPro" id="IPR053931">
    <property type="entry name" value="RapZ_C"/>
</dbReference>
<dbReference type="NCBIfam" id="NF003828">
    <property type="entry name" value="PRK05416.1"/>
    <property type="match status" value="1"/>
</dbReference>
<dbReference type="PANTHER" id="PTHR30448">
    <property type="entry name" value="RNASE ADAPTER PROTEIN RAPZ"/>
    <property type="match status" value="1"/>
</dbReference>
<dbReference type="PANTHER" id="PTHR30448:SF0">
    <property type="entry name" value="RNASE ADAPTER PROTEIN RAPZ"/>
    <property type="match status" value="1"/>
</dbReference>
<dbReference type="Pfam" id="PF22740">
    <property type="entry name" value="PapZ_C"/>
    <property type="match status" value="1"/>
</dbReference>
<dbReference type="Pfam" id="PF03668">
    <property type="entry name" value="RapZ-like_N"/>
    <property type="match status" value="1"/>
</dbReference>
<dbReference type="PIRSF" id="PIRSF005052">
    <property type="entry name" value="P-loopkin"/>
    <property type="match status" value="1"/>
</dbReference>
<dbReference type="SUPFAM" id="SSF52540">
    <property type="entry name" value="P-loop containing nucleoside triphosphate hydrolases"/>
    <property type="match status" value="1"/>
</dbReference>
<feature type="chain" id="PRO_1000056859" description="Nucleotide-binding protein Shewmr4_0670">
    <location>
        <begin position="1"/>
        <end position="284"/>
    </location>
</feature>
<feature type="binding site" evidence="1">
    <location>
        <begin position="8"/>
        <end position="15"/>
    </location>
    <ligand>
        <name>ATP</name>
        <dbReference type="ChEBI" id="CHEBI:30616"/>
    </ligand>
</feature>
<feature type="binding site" evidence="1">
    <location>
        <begin position="56"/>
        <end position="59"/>
    </location>
    <ligand>
        <name>GTP</name>
        <dbReference type="ChEBI" id="CHEBI:37565"/>
    </ligand>
</feature>
<name>Y670_SHESM</name>
<protein>
    <recommendedName>
        <fullName evidence="1">Nucleotide-binding protein Shewmr4_0670</fullName>
    </recommendedName>
</protein>
<comment type="function">
    <text evidence="1">Displays ATPase and GTPase activities.</text>
</comment>
<comment type="similarity">
    <text evidence="1">Belongs to the RapZ-like family.</text>
</comment>
<proteinExistence type="inferred from homology"/>
<accession>Q0HMG7</accession>
<sequence length="284" mass="32297">MKLVIVSGRSGSGKSVALRVLEDLGYYCVDNLPLPLIGSLLEQLKGSNDLVAISVDVRNLPEQDKVLVKQLTSLPEGTELTSFFLNSSDKVLLKRYSETRRLHPLSKSRVSLQEAIKLEGKLLEPLSQQMDHYIDTSNLNIYELSDQVRQILLGSVDKELVINFESFGFKHGMPTEADFMFDVRFLPNPHWEPELRPLTGLDEPVAEFLNRQPLVNKFIWQIENLLETWLPHLERNNRSYLTIAIGCTGGQHRSVYVAEQLAKRFSNGKHKVNARHRELSHAKA</sequence>
<gene>
    <name type="ordered locus">Shewmr4_0670</name>
</gene>